<feature type="chain" id="PRO_0000448118" description="Metalloendopeptidase OPG085">
    <location>
        <begin position="1"/>
        <end position="591"/>
    </location>
</feature>
<feature type="active site" evidence="2">
    <location>
        <position position="44"/>
    </location>
</feature>
<feature type="binding site" evidence="2">
    <location>
        <position position="41"/>
    </location>
    <ligand>
        <name>Zn(2+)</name>
        <dbReference type="ChEBI" id="CHEBI:29105"/>
        <note>catalytic</note>
    </ligand>
</feature>
<feature type="binding site" evidence="2">
    <location>
        <position position="45"/>
    </location>
    <ligand>
        <name>Zn(2+)</name>
        <dbReference type="ChEBI" id="CHEBI:29105"/>
        <note>catalytic</note>
    </ligand>
</feature>
<feature type="binding site" evidence="2">
    <location>
        <position position="112"/>
    </location>
    <ligand>
        <name>Zn(2+)</name>
        <dbReference type="ChEBI" id="CHEBI:29105"/>
        <note>catalytic</note>
    </ligand>
</feature>
<feature type="sequence variant" description="In strain: Garcia-1966.">
    <original>F</original>
    <variation>L</variation>
    <location>
        <position position="182"/>
    </location>
</feature>
<feature type="sequence variant" description="In strain: Garcia-1966.">
    <original>A</original>
    <variation>T</variation>
    <location>
        <position position="490"/>
    </location>
</feature>
<feature type="sequence variant" description="In strain: Garcia-1966.">
    <original>P</original>
    <variation>S</variation>
    <location>
        <position position="565"/>
    </location>
</feature>
<organismHost>
    <name type="scientific">Homo sapiens</name>
    <name type="common">Human</name>
    <dbReference type="NCBI Taxonomy" id="9606"/>
</organismHost>
<name>PG085_VARV</name>
<keyword id="KW-0378">Hydrolase</keyword>
<keyword id="KW-0426">Late protein</keyword>
<keyword id="KW-0479">Metal-binding</keyword>
<keyword id="KW-0482">Metalloprotease</keyword>
<keyword id="KW-0645">Protease</keyword>
<keyword id="KW-0946">Virion</keyword>
<keyword id="KW-0862">Zinc</keyword>
<sequence length="591" mass="68047">MIVLPNKVRIFINDRMKKDIYLGISNFGFENDIDEILGIAHLLEHLLISFDSTIFLANASTSRSYMSFWCKSINSATESDAIRTLVSWFFSNGKLKDNFSLSSIRFHIKELENEYYFRNEVFHCMDILTFLSGGDLYNGGRIDMIDNLNIVRDMLVNRMQRISGSNIVIFVKRLGPGTLDFFNQTFGSLPACPEIIPSSIPVSTNGKIVMTPSPFYTVMVKINPTLDNILGILYLYETYHLIDYETIGNQLYLTVSFIDETEYESFLRGEAILQISQCQRINMNYSDDYMMNIYLNFPWLSHDLYDYITRINDDSKSILISLTNEIYTSIINRDIIVIYPNFSKAMCNTRDTQQHPIVVLDATNDGLIKKPYRSIPLMKRLTSNEIFIRYGDASLMDMITLSLSKQDISLKRNAEGIRVKHSFSADDIQAIMESDSFLKYSRSKPAAMYQYIFLSFFASGNSIDDILTNRDSTLEFSKKTKSKILFGRNARYDVTTKSSFVCGIVRGKLLDKTSLVEMMWDLKKKGLIYSMEFTNLLSKNTFYLFTFTIYTDEVYDYLNTNKLFPAKCLVISTKGDVENFSSLKKDVVIRV</sequence>
<protein>
    <recommendedName>
        <fullName>Metalloendopeptidase OPG085</fullName>
        <ecNumber evidence="1">3.4.24.-</ecNumber>
    </recommendedName>
    <alternativeName>
        <fullName>Metalloendopeptidase G1</fullName>
    </alternativeName>
</protein>
<gene>
    <name type="primary">OPG085</name>
    <name type="ORF">G1L</name>
</gene>
<accession>P0DOT0</accession>
<accession>P32991</accession>
<accession>Q85379</accession>
<accession>Q89209</accession>
<organism>
    <name type="scientific">Variola virus</name>
    <dbReference type="NCBI Taxonomy" id="10255"/>
    <lineage>
        <taxon>Viruses</taxon>
        <taxon>Varidnaviria</taxon>
        <taxon>Bamfordvirae</taxon>
        <taxon>Nucleocytoviricota</taxon>
        <taxon>Pokkesviricetes</taxon>
        <taxon>Chitovirales</taxon>
        <taxon>Poxviridae</taxon>
        <taxon>Chordopoxvirinae</taxon>
        <taxon>Orthopoxvirus</taxon>
    </lineage>
</organism>
<comment type="function">
    <text evidence="1">Probably involved in maturation of some viral proteins by processing them preferentially at Ala-Gly-|-Ser/Thr/Lys motifs. Does not seem to be responsible for the cleavage of major core proteins.</text>
</comment>
<comment type="cofactor">
    <cofactor evidence="1">
        <name>Zn(2+)</name>
        <dbReference type="ChEBI" id="CHEBI:29105"/>
    </cofactor>
    <text evidence="1">Binds 1 zinc ion.</text>
</comment>
<comment type="subcellular location">
    <subcellularLocation>
        <location evidence="1">Virion</location>
    </subcellularLocation>
    <text evidence="1">Localizes to the virion core.</text>
</comment>
<comment type="PTM">
    <text evidence="1">Undergoes proteolytic processing during the course of infection. May be cleaved into 46 kDa and 22 kDa products (Potential).</text>
</comment>
<comment type="similarity">
    <text evidence="3">Belongs to the peptidase M44 family.</text>
</comment>
<evidence type="ECO:0000250" key="1">
    <source>
        <dbReference type="UniProtKB" id="P16713"/>
    </source>
</evidence>
<evidence type="ECO:0000255" key="2"/>
<evidence type="ECO:0000305" key="3"/>
<proteinExistence type="inferred from homology"/>
<reference key="1">
    <citation type="journal article" date="1993" name="Nature">
        <title>Potential virulence determinants in terminal regions of variola smallpox virus genome.</title>
        <authorList>
            <person name="Massung R.F."/>
            <person name="Esposito J.J."/>
            <person name="Liu L.I."/>
            <person name="Qi J."/>
            <person name="Utterback T.R."/>
            <person name="Knight J.C."/>
            <person name="Aubin L."/>
            <person name="Yuran T.E."/>
            <person name="Parsons J.M."/>
            <person name="Loparev V.N."/>
            <person name="Selivanov N.A."/>
            <person name="Cavallaro K.F."/>
            <person name="Kerlavage A.R."/>
            <person name="Mahy B.W.J."/>
            <person name="Venter J.C."/>
        </authorList>
    </citation>
    <scope>NUCLEOTIDE SEQUENCE [GENOMIC DNA]</scope>
    <source>
        <strain>Bangladesh-1975</strain>
    </source>
</reference>
<reference key="2">
    <citation type="journal article" date="2000" name="Virology">
        <title>Alastrim smallpox variola minor virus genome DNA sequences.</title>
        <authorList>
            <person name="Shchelkunov S.N."/>
            <person name="Totmenin A.V."/>
            <person name="Loparev V.N."/>
            <person name="Safronov P.F."/>
            <person name="Gutorov V.V."/>
            <person name="Chizhikov V.E."/>
            <person name="Knight J.C."/>
            <person name="Parsons J.M."/>
            <person name="Massung R.F."/>
            <person name="Esposito J.J."/>
        </authorList>
    </citation>
    <scope>NUCLEOTIDE SEQUENCE [LARGE SCALE GENOMIC DNA]</scope>
    <source>
        <strain>Garcia-1966</strain>
    </source>
</reference>
<dbReference type="EC" id="3.4.24.-" evidence="1"/>
<dbReference type="EMBL" id="L22579">
    <property type="protein sequence ID" value="AAA60811.1"/>
    <property type="molecule type" value="Genomic_DNA"/>
</dbReference>
<dbReference type="EMBL" id="X76267">
    <property type="protein sequence ID" value="CAA53868.1"/>
    <property type="molecule type" value="Genomic_DNA"/>
</dbReference>
<dbReference type="EMBL" id="Y16780">
    <property type="protein sequence ID" value="CAB54663.1"/>
    <property type="molecule type" value="Genomic_DNA"/>
</dbReference>
<dbReference type="PIR" id="E72158">
    <property type="entry name" value="E72158"/>
</dbReference>
<dbReference type="PIR" id="T28501">
    <property type="entry name" value="T28501"/>
</dbReference>
<dbReference type="SMR" id="P0DOT0"/>
<dbReference type="Proteomes" id="UP000111493">
    <property type="component" value="Segment"/>
</dbReference>
<dbReference type="Proteomes" id="UP000119805">
    <property type="component" value="Segment"/>
</dbReference>
<dbReference type="GO" id="GO:0044423">
    <property type="term" value="C:virion component"/>
    <property type="evidence" value="ECO:0007669"/>
    <property type="project" value="UniProtKB-KW"/>
</dbReference>
<dbReference type="GO" id="GO:0004222">
    <property type="term" value="F:metalloendopeptidase activity"/>
    <property type="evidence" value="ECO:0007669"/>
    <property type="project" value="InterPro"/>
</dbReference>
<dbReference type="GO" id="GO:0008270">
    <property type="term" value="F:zinc ion binding"/>
    <property type="evidence" value="ECO:0007669"/>
    <property type="project" value="InterPro"/>
</dbReference>
<dbReference type="GO" id="GO:0006508">
    <property type="term" value="P:proteolysis"/>
    <property type="evidence" value="ECO:0007669"/>
    <property type="project" value="UniProtKB-KW"/>
</dbReference>
<dbReference type="GO" id="GO:0019058">
    <property type="term" value="P:viral life cycle"/>
    <property type="evidence" value="ECO:0007669"/>
    <property type="project" value="InterPro"/>
</dbReference>
<dbReference type="InterPro" id="IPR011249">
    <property type="entry name" value="Metalloenz_LuxS/M16"/>
</dbReference>
<dbReference type="InterPro" id="IPR005072">
    <property type="entry name" value="Peptidase_M44"/>
</dbReference>
<dbReference type="Pfam" id="PF03410">
    <property type="entry name" value="Peptidase_M44"/>
    <property type="match status" value="1"/>
</dbReference>
<dbReference type="PIRSF" id="PIRSF015679">
    <property type="entry name" value="Peptidase_M44"/>
    <property type="match status" value="1"/>
</dbReference>
<dbReference type="SUPFAM" id="SSF63411">
    <property type="entry name" value="LuxS/MPP-like metallohydrolase"/>
    <property type="match status" value="1"/>
</dbReference>